<accession>B0TLI8</accession>
<reference key="1">
    <citation type="submission" date="2008-01" db="EMBL/GenBank/DDBJ databases">
        <title>Complete sequence of Shewanella halifaxensis HAW-EB4.</title>
        <authorList>
            <consortium name="US DOE Joint Genome Institute"/>
            <person name="Copeland A."/>
            <person name="Lucas S."/>
            <person name="Lapidus A."/>
            <person name="Glavina del Rio T."/>
            <person name="Dalin E."/>
            <person name="Tice H."/>
            <person name="Bruce D."/>
            <person name="Goodwin L."/>
            <person name="Pitluck S."/>
            <person name="Sims D."/>
            <person name="Brettin T."/>
            <person name="Detter J.C."/>
            <person name="Han C."/>
            <person name="Kuske C.R."/>
            <person name="Schmutz J."/>
            <person name="Larimer F."/>
            <person name="Land M."/>
            <person name="Hauser L."/>
            <person name="Kyrpides N."/>
            <person name="Kim E."/>
            <person name="Zhao J.-S."/>
            <person name="Richardson P."/>
        </authorList>
    </citation>
    <scope>NUCLEOTIDE SEQUENCE [LARGE SCALE GENOMIC DNA]</scope>
    <source>
        <strain>HAW-EB4</strain>
    </source>
</reference>
<organism>
    <name type="scientific">Shewanella halifaxensis (strain HAW-EB4)</name>
    <dbReference type="NCBI Taxonomy" id="458817"/>
    <lineage>
        <taxon>Bacteria</taxon>
        <taxon>Pseudomonadati</taxon>
        <taxon>Pseudomonadota</taxon>
        <taxon>Gammaproteobacteria</taxon>
        <taxon>Alteromonadales</taxon>
        <taxon>Shewanellaceae</taxon>
        <taxon>Shewanella</taxon>
    </lineage>
</organism>
<protein>
    <recommendedName>
        <fullName evidence="1">GTPase Der</fullName>
    </recommendedName>
    <alternativeName>
        <fullName evidence="1">GTP-binding protein EngA</fullName>
    </alternativeName>
</protein>
<dbReference type="EMBL" id="CP000931">
    <property type="protein sequence ID" value="ABZ75938.1"/>
    <property type="molecule type" value="Genomic_DNA"/>
</dbReference>
<dbReference type="RefSeq" id="WP_012276478.1">
    <property type="nucleotide sequence ID" value="NC_010334.1"/>
</dbReference>
<dbReference type="SMR" id="B0TLI8"/>
<dbReference type="STRING" id="458817.Shal_1371"/>
<dbReference type="KEGG" id="shl:Shal_1371"/>
<dbReference type="eggNOG" id="COG1160">
    <property type="taxonomic scope" value="Bacteria"/>
</dbReference>
<dbReference type="HOGENOM" id="CLU_016077_6_2_6"/>
<dbReference type="OrthoDB" id="9805918at2"/>
<dbReference type="Proteomes" id="UP000001317">
    <property type="component" value="Chromosome"/>
</dbReference>
<dbReference type="GO" id="GO:0005525">
    <property type="term" value="F:GTP binding"/>
    <property type="evidence" value="ECO:0007669"/>
    <property type="project" value="UniProtKB-UniRule"/>
</dbReference>
<dbReference type="GO" id="GO:0043022">
    <property type="term" value="F:ribosome binding"/>
    <property type="evidence" value="ECO:0007669"/>
    <property type="project" value="TreeGrafter"/>
</dbReference>
<dbReference type="GO" id="GO:0042254">
    <property type="term" value="P:ribosome biogenesis"/>
    <property type="evidence" value="ECO:0007669"/>
    <property type="project" value="UniProtKB-KW"/>
</dbReference>
<dbReference type="CDD" id="cd01894">
    <property type="entry name" value="EngA1"/>
    <property type="match status" value="1"/>
</dbReference>
<dbReference type="CDD" id="cd01895">
    <property type="entry name" value="EngA2"/>
    <property type="match status" value="1"/>
</dbReference>
<dbReference type="FunFam" id="3.30.300.20:FF:000004">
    <property type="entry name" value="GTPase Der"/>
    <property type="match status" value="1"/>
</dbReference>
<dbReference type="FunFam" id="3.40.50.300:FF:000040">
    <property type="entry name" value="GTPase Der"/>
    <property type="match status" value="1"/>
</dbReference>
<dbReference type="FunFam" id="3.40.50.300:FF:000057">
    <property type="entry name" value="GTPase Der"/>
    <property type="match status" value="1"/>
</dbReference>
<dbReference type="Gene3D" id="3.30.300.20">
    <property type="match status" value="1"/>
</dbReference>
<dbReference type="Gene3D" id="3.40.50.300">
    <property type="entry name" value="P-loop containing nucleotide triphosphate hydrolases"/>
    <property type="match status" value="2"/>
</dbReference>
<dbReference type="HAMAP" id="MF_00195">
    <property type="entry name" value="GTPase_Der"/>
    <property type="match status" value="1"/>
</dbReference>
<dbReference type="InterPro" id="IPR031166">
    <property type="entry name" value="G_ENGA"/>
</dbReference>
<dbReference type="InterPro" id="IPR006073">
    <property type="entry name" value="GTP-bd"/>
</dbReference>
<dbReference type="InterPro" id="IPR016484">
    <property type="entry name" value="GTPase_Der"/>
</dbReference>
<dbReference type="InterPro" id="IPR032859">
    <property type="entry name" value="KH_dom-like"/>
</dbReference>
<dbReference type="InterPro" id="IPR015946">
    <property type="entry name" value="KH_dom-like_a/b"/>
</dbReference>
<dbReference type="InterPro" id="IPR027417">
    <property type="entry name" value="P-loop_NTPase"/>
</dbReference>
<dbReference type="InterPro" id="IPR005225">
    <property type="entry name" value="Small_GTP-bd"/>
</dbReference>
<dbReference type="NCBIfam" id="TIGR03594">
    <property type="entry name" value="GTPase_EngA"/>
    <property type="match status" value="1"/>
</dbReference>
<dbReference type="NCBIfam" id="TIGR00231">
    <property type="entry name" value="small_GTP"/>
    <property type="match status" value="2"/>
</dbReference>
<dbReference type="PANTHER" id="PTHR43834">
    <property type="entry name" value="GTPASE DER"/>
    <property type="match status" value="1"/>
</dbReference>
<dbReference type="PANTHER" id="PTHR43834:SF6">
    <property type="entry name" value="GTPASE DER"/>
    <property type="match status" value="1"/>
</dbReference>
<dbReference type="Pfam" id="PF14714">
    <property type="entry name" value="KH_dom-like"/>
    <property type="match status" value="1"/>
</dbReference>
<dbReference type="Pfam" id="PF01926">
    <property type="entry name" value="MMR_HSR1"/>
    <property type="match status" value="2"/>
</dbReference>
<dbReference type="PIRSF" id="PIRSF006485">
    <property type="entry name" value="GTP-binding_EngA"/>
    <property type="match status" value="1"/>
</dbReference>
<dbReference type="PRINTS" id="PR00326">
    <property type="entry name" value="GTP1OBG"/>
</dbReference>
<dbReference type="SUPFAM" id="SSF52540">
    <property type="entry name" value="P-loop containing nucleoside triphosphate hydrolases"/>
    <property type="match status" value="2"/>
</dbReference>
<dbReference type="PROSITE" id="PS51712">
    <property type="entry name" value="G_ENGA"/>
    <property type="match status" value="2"/>
</dbReference>
<keyword id="KW-0342">GTP-binding</keyword>
<keyword id="KW-0547">Nucleotide-binding</keyword>
<keyword id="KW-0677">Repeat</keyword>
<keyword id="KW-0690">Ribosome biogenesis</keyword>
<proteinExistence type="inferred from homology"/>
<evidence type="ECO:0000255" key="1">
    <source>
        <dbReference type="HAMAP-Rule" id="MF_00195"/>
    </source>
</evidence>
<feature type="chain" id="PRO_1000077673" description="GTPase Der">
    <location>
        <begin position="1"/>
        <end position="490"/>
    </location>
</feature>
<feature type="domain" description="EngA-type G 1">
    <location>
        <begin position="3"/>
        <end position="166"/>
    </location>
</feature>
<feature type="domain" description="EngA-type G 2">
    <location>
        <begin position="200"/>
        <end position="373"/>
    </location>
</feature>
<feature type="domain" description="KH-like" evidence="1">
    <location>
        <begin position="374"/>
        <end position="458"/>
    </location>
</feature>
<feature type="binding site" evidence="1">
    <location>
        <begin position="9"/>
        <end position="16"/>
    </location>
    <ligand>
        <name>GTP</name>
        <dbReference type="ChEBI" id="CHEBI:37565"/>
        <label>1</label>
    </ligand>
</feature>
<feature type="binding site" evidence="1">
    <location>
        <begin position="56"/>
        <end position="60"/>
    </location>
    <ligand>
        <name>GTP</name>
        <dbReference type="ChEBI" id="CHEBI:37565"/>
        <label>1</label>
    </ligand>
</feature>
<feature type="binding site" evidence="1">
    <location>
        <begin position="118"/>
        <end position="121"/>
    </location>
    <ligand>
        <name>GTP</name>
        <dbReference type="ChEBI" id="CHEBI:37565"/>
        <label>1</label>
    </ligand>
</feature>
<feature type="binding site" evidence="1">
    <location>
        <begin position="206"/>
        <end position="213"/>
    </location>
    <ligand>
        <name>GTP</name>
        <dbReference type="ChEBI" id="CHEBI:37565"/>
        <label>2</label>
    </ligand>
</feature>
<feature type="binding site" evidence="1">
    <location>
        <begin position="253"/>
        <end position="257"/>
    </location>
    <ligand>
        <name>GTP</name>
        <dbReference type="ChEBI" id="CHEBI:37565"/>
        <label>2</label>
    </ligand>
</feature>
<feature type="binding site" evidence="1">
    <location>
        <begin position="318"/>
        <end position="321"/>
    </location>
    <ligand>
        <name>GTP</name>
        <dbReference type="ChEBI" id="CHEBI:37565"/>
        <label>2</label>
    </ligand>
</feature>
<comment type="function">
    <text evidence="1">GTPase that plays an essential role in the late steps of ribosome biogenesis.</text>
</comment>
<comment type="subunit">
    <text evidence="1">Associates with the 50S ribosomal subunit.</text>
</comment>
<comment type="similarity">
    <text evidence="1">Belongs to the TRAFAC class TrmE-Era-EngA-EngB-Septin-like GTPase superfamily. EngA (Der) GTPase family.</text>
</comment>
<gene>
    <name evidence="1" type="primary">der</name>
    <name type="synonym">engA</name>
    <name type="ordered locus">Shal_1371</name>
</gene>
<sequence>MIPVVALVGRPNVGKSTLFNRLTRTRDALVADFPGLTRDRKYGRAHLAGYEFIVVDTGGIDGTEEGIETRMAEQSLAAIEEADVVLFLTDARAGLTAADLAIAQHLRSREKTTFVVANKVDGIDADSACAEFWSLGLGEVYQMAAAQGRGVTNMIEYSLAPYAEAMGIVKQEDGDDDEEEREFTEEEAEAEQKRLQDLPIKLAIIGKPNVGKSTLTNRILGEERVVVYDEPGTTRDSIYIPMERQGREYVLIDTAGVRRRSKVHETVEKFSVIKTLKAVEDSNVVLLVIDAREGIAEQDLGLLGFVLNAGRALVIAVNKWDGIDQNVKDRVKTELDRRLGFIDFARIHFISALHGTGVGHLFESIEEAYDSATRRVSTSMLTRIMQMSQDDHQPPLVNGRRVKLKYAHAGGYNPPIVVVHGNQVKKLPDSYKRYMMNYFRRSLKVIGTPIQLRFQEGGNPFEGLNTKKLTVSQERRRKRMVGHIRDKNKD</sequence>
<name>DER_SHEHH</name>